<organism>
    <name type="scientific">Streptococcus thermophilus (strain ATCC BAA-250 / LMG 18311)</name>
    <dbReference type="NCBI Taxonomy" id="264199"/>
    <lineage>
        <taxon>Bacteria</taxon>
        <taxon>Bacillati</taxon>
        <taxon>Bacillota</taxon>
        <taxon>Bacilli</taxon>
        <taxon>Lactobacillales</taxon>
        <taxon>Streptococcaceae</taxon>
        <taxon>Streptococcus</taxon>
    </lineage>
</organism>
<proteinExistence type="inferred from homology"/>
<name>METN_STRT2</name>
<dbReference type="EC" id="7.4.2.11" evidence="1"/>
<dbReference type="EMBL" id="CP000023">
    <property type="protein sequence ID" value="AAV60023.1"/>
    <property type="molecule type" value="Genomic_DNA"/>
</dbReference>
<dbReference type="RefSeq" id="WP_011225469.1">
    <property type="nucleotide sequence ID" value="NC_006448.1"/>
</dbReference>
<dbReference type="SMR" id="Q5M5Z2"/>
<dbReference type="STRING" id="264199.stu0301"/>
<dbReference type="KEGG" id="stl:stu0301"/>
<dbReference type="eggNOG" id="COG1135">
    <property type="taxonomic scope" value="Bacteria"/>
</dbReference>
<dbReference type="HOGENOM" id="CLU_000604_1_3_9"/>
<dbReference type="Proteomes" id="UP000001170">
    <property type="component" value="Chromosome"/>
</dbReference>
<dbReference type="GO" id="GO:0005886">
    <property type="term" value="C:plasma membrane"/>
    <property type="evidence" value="ECO:0007669"/>
    <property type="project" value="UniProtKB-SubCell"/>
</dbReference>
<dbReference type="GO" id="GO:0033232">
    <property type="term" value="F:ABC-type D-methionine transporter activity"/>
    <property type="evidence" value="ECO:0007669"/>
    <property type="project" value="UniProtKB-EC"/>
</dbReference>
<dbReference type="GO" id="GO:0005524">
    <property type="term" value="F:ATP binding"/>
    <property type="evidence" value="ECO:0007669"/>
    <property type="project" value="UniProtKB-KW"/>
</dbReference>
<dbReference type="GO" id="GO:0016887">
    <property type="term" value="F:ATP hydrolysis activity"/>
    <property type="evidence" value="ECO:0007669"/>
    <property type="project" value="InterPro"/>
</dbReference>
<dbReference type="CDD" id="cd03258">
    <property type="entry name" value="ABC_MetN_methionine_transporter"/>
    <property type="match status" value="1"/>
</dbReference>
<dbReference type="Gene3D" id="3.30.70.260">
    <property type="match status" value="1"/>
</dbReference>
<dbReference type="Gene3D" id="3.40.50.300">
    <property type="entry name" value="P-loop containing nucleotide triphosphate hydrolases"/>
    <property type="match status" value="1"/>
</dbReference>
<dbReference type="InterPro" id="IPR003593">
    <property type="entry name" value="AAA+_ATPase"/>
</dbReference>
<dbReference type="InterPro" id="IPR003439">
    <property type="entry name" value="ABC_transporter-like_ATP-bd"/>
</dbReference>
<dbReference type="InterPro" id="IPR017871">
    <property type="entry name" value="ABC_transporter-like_CS"/>
</dbReference>
<dbReference type="InterPro" id="IPR045865">
    <property type="entry name" value="ACT-like_dom_sf"/>
</dbReference>
<dbReference type="InterPro" id="IPR041701">
    <property type="entry name" value="MetN_ABC"/>
</dbReference>
<dbReference type="InterPro" id="IPR050086">
    <property type="entry name" value="MetN_ABC_transporter-like"/>
</dbReference>
<dbReference type="InterPro" id="IPR018449">
    <property type="entry name" value="NIL_domain"/>
</dbReference>
<dbReference type="InterPro" id="IPR027417">
    <property type="entry name" value="P-loop_NTPase"/>
</dbReference>
<dbReference type="PANTHER" id="PTHR43166">
    <property type="entry name" value="AMINO ACID IMPORT ATP-BINDING PROTEIN"/>
    <property type="match status" value="1"/>
</dbReference>
<dbReference type="PANTHER" id="PTHR43166:SF30">
    <property type="entry name" value="METHIONINE IMPORT ATP-BINDING PROTEIN METN"/>
    <property type="match status" value="1"/>
</dbReference>
<dbReference type="Pfam" id="PF00005">
    <property type="entry name" value="ABC_tran"/>
    <property type="match status" value="1"/>
</dbReference>
<dbReference type="Pfam" id="PF09383">
    <property type="entry name" value="NIL"/>
    <property type="match status" value="1"/>
</dbReference>
<dbReference type="SMART" id="SM00382">
    <property type="entry name" value="AAA"/>
    <property type="match status" value="1"/>
</dbReference>
<dbReference type="SMART" id="SM00930">
    <property type="entry name" value="NIL"/>
    <property type="match status" value="1"/>
</dbReference>
<dbReference type="SUPFAM" id="SSF55021">
    <property type="entry name" value="ACT-like"/>
    <property type="match status" value="1"/>
</dbReference>
<dbReference type="SUPFAM" id="SSF52540">
    <property type="entry name" value="P-loop containing nucleoside triphosphate hydrolases"/>
    <property type="match status" value="1"/>
</dbReference>
<dbReference type="PROSITE" id="PS00211">
    <property type="entry name" value="ABC_TRANSPORTER_1"/>
    <property type="match status" value="1"/>
</dbReference>
<dbReference type="PROSITE" id="PS50893">
    <property type="entry name" value="ABC_TRANSPORTER_2"/>
    <property type="match status" value="1"/>
</dbReference>
<dbReference type="PROSITE" id="PS51264">
    <property type="entry name" value="METN"/>
    <property type="match status" value="1"/>
</dbReference>
<protein>
    <recommendedName>
        <fullName evidence="1">Methionine import ATP-binding protein MetN</fullName>
        <ecNumber evidence="1">7.4.2.11</ecNumber>
    </recommendedName>
</protein>
<feature type="chain" id="PRO_0000270426" description="Methionine import ATP-binding protein MetN">
    <location>
        <begin position="1"/>
        <end position="355"/>
    </location>
</feature>
<feature type="domain" description="ABC transporter" evidence="1">
    <location>
        <begin position="8"/>
        <end position="250"/>
    </location>
</feature>
<feature type="binding site" evidence="1">
    <location>
        <begin position="42"/>
        <end position="49"/>
    </location>
    <ligand>
        <name>ATP</name>
        <dbReference type="ChEBI" id="CHEBI:30616"/>
    </ligand>
</feature>
<gene>
    <name evidence="1" type="primary">metN</name>
    <name type="ordered locus">stu0301</name>
</gene>
<sequence>MSNVIIDLKNIDITFTQKRRTIQAVKDVSIQIEKGDIYGIVGYSGAGKSTLVRAINLLQVPTAGKITIGEDVTFEDGKVQLTTKELRQKRQTIGMIFQHFNLMAQKTAYENVAFALRHSKLSNEEKDKKIRGLLELVDLADRAENYPAQLSGGQKQRVAIARALANDPEILISDESTSALDPKTTKQILSLLQDLNKKLGLTVVMITHEMQIVKDICNRVAVMQNGQLLEEGSVLDIFSNPQEDLTQEFIETAAGIEDALAKINAQPLVKNLPASALLVQLKYVGSSTDRPLLTEIFKDFGVSGNILYGNVEILGDTPVGELVVVLDGDSDKVIAALKAIENAGVSLRVLKKGAQ</sequence>
<reference key="1">
    <citation type="journal article" date="2004" name="Nat. Biotechnol.">
        <title>Complete sequence and comparative genome analysis of the dairy bacterium Streptococcus thermophilus.</title>
        <authorList>
            <person name="Bolotin A."/>
            <person name="Quinquis B."/>
            <person name="Renault P."/>
            <person name="Sorokin A."/>
            <person name="Ehrlich S.D."/>
            <person name="Kulakauskas S."/>
            <person name="Lapidus A."/>
            <person name="Goltsman E."/>
            <person name="Mazur M."/>
            <person name="Pusch G.D."/>
            <person name="Fonstein M."/>
            <person name="Overbeek R."/>
            <person name="Kyprides N."/>
            <person name="Purnelle B."/>
            <person name="Prozzi D."/>
            <person name="Ngui K."/>
            <person name="Masuy D."/>
            <person name="Hancy F."/>
            <person name="Burteau S."/>
            <person name="Boutry M."/>
            <person name="Delcour J."/>
            <person name="Goffeau A."/>
            <person name="Hols P."/>
        </authorList>
    </citation>
    <scope>NUCLEOTIDE SEQUENCE [LARGE SCALE GENOMIC DNA]</scope>
    <source>
        <strain>ATCC BAA-250 / LMG 18311</strain>
    </source>
</reference>
<keyword id="KW-0029">Amino-acid transport</keyword>
<keyword id="KW-0067">ATP-binding</keyword>
<keyword id="KW-1003">Cell membrane</keyword>
<keyword id="KW-0472">Membrane</keyword>
<keyword id="KW-0547">Nucleotide-binding</keyword>
<keyword id="KW-1185">Reference proteome</keyword>
<keyword id="KW-1278">Translocase</keyword>
<keyword id="KW-0813">Transport</keyword>
<accession>Q5M5Z2</accession>
<comment type="function">
    <text evidence="1">Part of the ABC transporter complex MetNIQ involved in methionine import. Responsible for energy coupling to the transport system.</text>
</comment>
<comment type="catalytic activity">
    <reaction evidence="1">
        <text>L-methionine(out) + ATP + H2O = L-methionine(in) + ADP + phosphate + H(+)</text>
        <dbReference type="Rhea" id="RHEA:29779"/>
        <dbReference type="ChEBI" id="CHEBI:15377"/>
        <dbReference type="ChEBI" id="CHEBI:15378"/>
        <dbReference type="ChEBI" id="CHEBI:30616"/>
        <dbReference type="ChEBI" id="CHEBI:43474"/>
        <dbReference type="ChEBI" id="CHEBI:57844"/>
        <dbReference type="ChEBI" id="CHEBI:456216"/>
        <dbReference type="EC" id="7.4.2.11"/>
    </reaction>
</comment>
<comment type="catalytic activity">
    <reaction evidence="1">
        <text>D-methionine(out) + ATP + H2O = D-methionine(in) + ADP + phosphate + H(+)</text>
        <dbReference type="Rhea" id="RHEA:29767"/>
        <dbReference type="ChEBI" id="CHEBI:15377"/>
        <dbReference type="ChEBI" id="CHEBI:15378"/>
        <dbReference type="ChEBI" id="CHEBI:30616"/>
        <dbReference type="ChEBI" id="CHEBI:43474"/>
        <dbReference type="ChEBI" id="CHEBI:57932"/>
        <dbReference type="ChEBI" id="CHEBI:456216"/>
        <dbReference type="EC" id="7.4.2.11"/>
    </reaction>
</comment>
<comment type="subunit">
    <text evidence="1">The complex is composed of two ATP-binding proteins (MetN), two transmembrane proteins (MetI) and a solute-binding protein (MetQ).</text>
</comment>
<comment type="subcellular location">
    <subcellularLocation>
        <location evidence="1">Cell membrane</location>
        <topology evidence="1">Peripheral membrane protein</topology>
    </subcellularLocation>
</comment>
<comment type="similarity">
    <text evidence="1">Belongs to the ABC transporter superfamily. Methionine importer (TC 3.A.1.24) family.</text>
</comment>
<evidence type="ECO:0000255" key="1">
    <source>
        <dbReference type="HAMAP-Rule" id="MF_01719"/>
    </source>
</evidence>